<dbReference type="EC" id="1.1.1.-" evidence="7"/>
<dbReference type="EMBL" id="AB981314">
    <property type="protein sequence ID" value="BAP81863.1"/>
    <property type="molecule type" value="Genomic_DNA"/>
</dbReference>
<dbReference type="SMR" id="A0A097ZPE8"/>
<dbReference type="BioCyc" id="MetaCyc:MONOMER-19053"/>
<dbReference type="UniPathway" id="UPA00213"/>
<dbReference type="GO" id="GO:0016616">
    <property type="term" value="F:oxidoreductase activity, acting on the CH-OH group of donors, NAD or NADP as acceptor"/>
    <property type="evidence" value="ECO:0007669"/>
    <property type="project" value="TreeGrafter"/>
</dbReference>
<dbReference type="GO" id="GO:0016114">
    <property type="term" value="P:terpenoid biosynthetic process"/>
    <property type="evidence" value="ECO:0007669"/>
    <property type="project" value="UniProtKB-UniPathway"/>
</dbReference>
<dbReference type="CDD" id="cd05233">
    <property type="entry name" value="SDR_c"/>
    <property type="match status" value="1"/>
</dbReference>
<dbReference type="Gene3D" id="3.40.50.720">
    <property type="entry name" value="NAD(P)-binding Rossmann-like Domain"/>
    <property type="match status" value="1"/>
</dbReference>
<dbReference type="InterPro" id="IPR036291">
    <property type="entry name" value="NAD(P)-bd_dom_sf"/>
</dbReference>
<dbReference type="InterPro" id="IPR002347">
    <property type="entry name" value="SDR_fam"/>
</dbReference>
<dbReference type="PANTHER" id="PTHR42760:SF37">
    <property type="entry name" value="CLAVALDEHYDE DEHYDROGENASE"/>
    <property type="match status" value="1"/>
</dbReference>
<dbReference type="PANTHER" id="PTHR42760">
    <property type="entry name" value="SHORT-CHAIN DEHYDROGENASES/REDUCTASES FAMILY MEMBER"/>
    <property type="match status" value="1"/>
</dbReference>
<dbReference type="Pfam" id="PF00106">
    <property type="entry name" value="adh_short"/>
    <property type="match status" value="1"/>
</dbReference>
<dbReference type="PRINTS" id="PR00081">
    <property type="entry name" value="GDHRDH"/>
</dbReference>
<dbReference type="PRINTS" id="PR00080">
    <property type="entry name" value="SDRFAMILY"/>
</dbReference>
<dbReference type="SUPFAM" id="SSF51735">
    <property type="entry name" value="NAD(P)-binding Rossmann-fold domains"/>
    <property type="match status" value="1"/>
</dbReference>
<sequence length="290" mass="31386">MEKAVSQFKDFVQSQHHDSYAAIQQADHRGHVVAITGASSGIGKAIAVSYGRCGVSALVLIARRPLDDVKSTVIAASVAAGHSPPEVMTVAANVADETSIYLAATKVKETLGHIDILVNNAGRVGTWGNVEAGEAQDWWQTWEVNIKGVYLTTRAFIPMLLQGKQKTIVNIGSMGVVSPVANLSAYLPSKLALIQFTNIVALEYSSQGLVAFTAYPGDVATELTGSFPEAMSPYFVDTPELPGDSIAWLTQRRLEWLSGRFVSLRWDLPELVSRQSEIVEGDKLRVTMRV</sequence>
<reference key="1">
    <citation type="journal article" date="2014" name="J. Am. Chem. Soc.">
        <title>Complete biosynthetic pathway of anditomin: nature's sophisticated synthetic route to a complex fungal meroterpenoid.</title>
        <authorList>
            <person name="Matsuda Y."/>
            <person name="Wakimoto T."/>
            <person name="Mori T."/>
            <person name="Awakawa T."/>
            <person name="Abe I."/>
        </authorList>
    </citation>
    <scope>NUCLEOTIDE SEQUENCE [GENOMIC DNA]</scope>
    <scope>FUNCTION</scope>
    <scope>CATALYTIC ACTIVITY</scope>
    <scope>DISRUPTION PHENOTYPE</scope>
    <source>
        <strain>ATCC 12069 / CBS 136.55 / IMI 60316 / NBRC 32302</strain>
    </source>
</reference>
<protein>
    <recommendedName>
        <fullName evidence="5">Short chain dehydrogenase andI</fullName>
        <ecNumber evidence="7">1.1.1.-</ecNumber>
    </recommendedName>
    <alternativeName>
        <fullName evidence="5">Anditomin synthesis protein I</fullName>
    </alternativeName>
</protein>
<gene>
    <name evidence="5" type="primary">andI</name>
</gene>
<accession>A0A097ZPE8</accession>
<proteinExistence type="evidence at protein level"/>
<feature type="chain" id="PRO_0000436585" description="Short chain dehydrogenase andI">
    <location>
        <begin position="1"/>
        <end position="290"/>
    </location>
</feature>
<feature type="active site" description="Proton acceptor" evidence="3">
    <location>
        <position position="186"/>
    </location>
</feature>
<feature type="active site" description="Lowers pKa of active site Tyr" evidence="2">
    <location>
        <position position="190"/>
    </location>
</feature>
<feature type="binding site" evidence="1">
    <location>
        <position position="35"/>
    </location>
    <ligand>
        <name>NADP(+)</name>
        <dbReference type="ChEBI" id="CHEBI:58349"/>
    </ligand>
</feature>
<feature type="binding site" evidence="2">
    <location>
        <position position="120"/>
    </location>
    <ligand>
        <name>NADP(+)</name>
        <dbReference type="ChEBI" id="CHEBI:58349"/>
    </ligand>
</feature>
<feature type="binding site" evidence="1">
    <location>
        <position position="154"/>
    </location>
    <ligand>
        <name>NADP(+)</name>
        <dbReference type="ChEBI" id="CHEBI:58349"/>
    </ligand>
</feature>
<feature type="binding site" evidence="2">
    <location>
        <position position="186"/>
    </location>
    <ligand>
        <name>NADP(+)</name>
        <dbReference type="ChEBI" id="CHEBI:58349"/>
    </ligand>
</feature>
<feature type="binding site" evidence="2">
    <location>
        <position position="190"/>
    </location>
    <ligand>
        <name>NADP(+)</name>
        <dbReference type="ChEBI" id="CHEBI:58349"/>
    </ligand>
</feature>
<feature type="binding site" evidence="2">
    <location>
        <position position="219"/>
    </location>
    <ligand>
        <name>NADP(+)</name>
        <dbReference type="ChEBI" id="CHEBI:58349"/>
    </ligand>
</feature>
<feature type="binding site" evidence="1">
    <location>
        <position position="221"/>
    </location>
    <ligand>
        <name>NADP(+)</name>
        <dbReference type="ChEBI" id="CHEBI:58349"/>
    </ligand>
</feature>
<organism>
    <name type="scientific">Emericella variicolor</name>
    <name type="common">Aspergillus stellatus</name>
    <dbReference type="NCBI Taxonomy" id="1549217"/>
    <lineage>
        <taxon>Eukaryota</taxon>
        <taxon>Fungi</taxon>
        <taxon>Dikarya</taxon>
        <taxon>Ascomycota</taxon>
        <taxon>Pezizomycotina</taxon>
        <taxon>Eurotiomycetes</taxon>
        <taxon>Eurotiomycetidae</taxon>
        <taxon>Eurotiales</taxon>
        <taxon>Aspergillaceae</taxon>
        <taxon>Aspergillus</taxon>
        <taxon>Aspergillus subgen. Nidulantes</taxon>
    </lineage>
</organism>
<evidence type="ECO:0000250" key="1">
    <source>
        <dbReference type="UniProtKB" id="L0E2Z4"/>
    </source>
</evidence>
<evidence type="ECO:0000250" key="2">
    <source>
        <dbReference type="UniProtKB" id="O93868"/>
    </source>
</evidence>
<evidence type="ECO:0000255" key="3">
    <source>
        <dbReference type="PROSITE-ProRule" id="PRU10001"/>
    </source>
</evidence>
<evidence type="ECO:0000269" key="4">
    <source>
    </source>
</evidence>
<evidence type="ECO:0000303" key="5">
    <source>
    </source>
</evidence>
<evidence type="ECO:0000305" key="6"/>
<evidence type="ECO:0000305" key="7">
    <source>
    </source>
</evidence>
<keyword id="KW-0521">NADP</keyword>
<keyword id="KW-0560">Oxidoreductase</keyword>
<comment type="function">
    <text evidence="4">Short chain dehydrogenase; part of the gene cluster that mediates the biosynthesis of anditomin, a fungal meroterpenoid (PubMed:25216349). The first step of the pathway is the synthesis of 3,5-dimethylorsellinic acid (DMOA) by the polyketide synthase andM (PubMed:25216349). DMOA is then converted to the phthalide compound 5,7-dihydroxy-4,6-dimethylphthalide (DHDMP) by the cytochrome P450 monooxygenase andK, which is further prenylated by the prenyltransferase andD to yield farnesyl-DHDMP (PubMed:25216349). Further epoxidation by the FAD-dependent monooxygenase andE leads to epoxyfarnesyl-DHDMP (PubMed:25216349). The next step involves the terpene cyclase andB that converts epoxyfarnesyl-DHDMP into preandiloid A through opening of the epoxide ring followed by the cyclization of the farnesyl moiety (PubMed:25216349). Preandiloid A is in turn oxidized at the C-3 hydroxyl group to yield preandiloid B by the dehydrogenase andC (PubMed:25216349). The dioxygenase andA is solely responsible for the dehydrogenation of preandiloid B leading to the enone preandiloid C, as well as for the intriguing structural rearrangement to generate the bicyclo[2.2.2]octane core, transforming preandiloid C into andiconin (PubMed:25216349). FAD-binding monooxygenase andJ then produces andilesin D which is reduced by dehydrogenase andI to yield andilesin A (PubMed:25216349). Action of acetyltransferase andG followed by a spontaneous acetate elimination leads then to andilesin B, which is in turn substrate of the short chain dehydrogenase andH to yield andilesin C (PubMed:25216349). Finally, the dioxygenase andF catalyzes the transformation of andilesin C to anditomin (PubMed:25216349).</text>
</comment>
<comment type="pathway">
    <text evidence="4">Secondary metabolite biosynthesis; terpenoid biosynthesis.</text>
</comment>
<comment type="disruption phenotype">
    <text evidence="4">Impairs the synthesis of anditomin but accumulates andilesin D (PubMed:25216349).</text>
</comment>
<comment type="similarity">
    <text evidence="6">Belongs to the short-chain dehydrogenases/reductases (SDR) family.</text>
</comment>
<name>ANDI_EMEVA</name>